<sequence>MESFETLEKLLSYSFKNKELLIEALSHPSLRQHHEYKDDKDYERLEFLGDAVLNLVITEILFRNFANYNEGHLAKIRSYLVCKETICMVGAKLTLKNYIIMTHGEEVAGGRDNLNNIENATEALIAAIYLDSNIETTYDIIEKLWAEFIKVQNLTDYDPKTALQEWAQASDHHLPIYRLIKREGASHSSTFTVLVKVKDYEQTGTGHAIKEAEKNAARSLLHRLKND</sequence>
<keyword id="KW-0963">Cytoplasm</keyword>
<keyword id="KW-0255">Endonuclease</keyword>
<keyword id="KW-0378">Hydrolase</keyword>
<keyword id="KW-0460">Magnesium</keyword>
<keyword id="KW-0479">Metal-binding</keyword>
<keyword id="KW-0507">mRNA processing</keyword>
<keyword id="KW-0540">Nuclease</keyword>
<keyword id="KW-0694">RNA-binding</keyword>
<keyword id="KW-0698">rRNA processing</keyword>
<keyword id="KW-0699">rRNA-binding</keyword>
<keyword id="KW-0819">tRNA processing</keyword>
<name>RNC_RICM5</name>
<organism>
    <name type="scientific">Rickettsia massiliae (strain Mtu5)</name>
    <dbReference type="NCBI Taxonomy" id="416276"/>
    <lineage>
        <taxon>Bacteria</taxon>
        <taxon>Pseudomonadati</taxon>
        <taxon>Pseudomonadota</taxon>
        <taxon>Alphaproteobacteria</taxon>
        <taxon>Rickettsiales</taxon>
        <taxon>Rickettsiaceae</taxon>
        <taxon>Rickettsieae</taxon>
        <taxon>Rickettsia</taxon>
        <taxon>spotted fever group</taxon>
    </lineage>
</organism>
<dbReference type="EC" id="3.1.26.3" evidence="1"/>
<dbReference type="EMBL" id="CP000683">
    <property type="protein sequence ID" value="ABV84458.1"/>
    <property type="molecule type" value="Genomic_DNA"/>
</dbReference>
<dbReference type="RefSeq" id="WP_012152436.1">
    <property type="nucleotide sequence ID" value="NC_009900.1"/>
</dbReference>
<dbReference type="SMR" id="A8F0M2"/>
<dbReference type="KEGG" id="rms:RMA_0164"/>
<dbReference type="HOGENOM" id="CLU_000907_1_1_5"/>
<dbReference type="Proteomes" id="UP000001311">
    <property type="component" value="Chromosome"/>
</dbReference>
<dbReference type="GO" id="GO:0005737">
    <property type="term" value="C:cytoplasm"/>
    <property type="evidence" value="ECO:0007669"/>
    <property type="project" value="UniProtKB-SubCell"/>
</dbReference>
<dbReference type="GO" id="GO:0003725">
    <property type="term" value="F:double-stranded RNA binding"/>
    <property type="evidence" value="ECO:0007669"/>
    <property type="project" value="TreeGrafter"/>
</dbReference>
<dbReference type="GO" id="GO:0046872">
    <property type="term" value="F:metal ion binding"/>
    <property type="evidence" value="ECO:0007669"/>
    <property type="project" value="UniProtKB-KW"/>
</dbReference>
<dbReference type="GO" id="GO:0004525">
    <property type="term" value="F:ribonuclease III activity"/>
    <property type="evidence" value="ECO:0007669"/>
    <property type="project" value="UniProtKB-UniRule"/>
</dbReference>
<dbReference type="GO" id="GO:0019843">
    <property type="term" value="F:rRNA binding"/>
    <property type="evidence" value="ECO:0007669"/>
    <property type="project" value="UniProtKB-KW"/>
</dbReference>
<dbReference type="GO" id="GO:0006397">
    <property type="term" value="P:mRNA processing"/>
    <property type="evidence" value="ECO:0007669"/>
    <property type="project" value="UniProtKB-UniRule"/>
</dbReference>
<dbReference type="GO" id="GO:0010468">
    <property type="term" value="P:regulation of gene expression"/>
    <property type="evidence" value="ECO:0007669"/>
    <property type="project" value="TreeGrafter"/>
</dbReference>
<dbReference type="GO" id="GO:0006364">
    <property type="term" value="P:rRNA processing"/>
    <property type="evidence" value="ECO:0007669"/>
    <property type="project" value="UniProtKB-UniRule"/>
</dbReference>
<dbReference type="GO" id="GO:0008033">
    <property type="term" value="P:tRNA processing"/>
    <property type="evidence" value="ECO:0007669"/>
    <property type="project" value="UniProtKB-KW"/>
</dbReference>
<dbReference type="CDD" id="cd10845">
    <property type="entry name" value="DSRM_RNAse_III_family"/>
    <property type="match status" value="1"/>
</dbReference>
<dbReference type="CDD" id="cd00593">
    <property type="entry name" value="RIBOc"/>
    <property type="match status" value="1"/>
</dbReference>
<dbReference type="FunFam" id="1.10.1520.10:FF:000001">
    <property type="entry name" value="Ribonuclease 3"/>
    <property type="match status" value="1"/>
</dbReference>
<dbReference type="Gene3D" id="3.30.160.20">
    <property type="match status" value="1"/>
</dbReference>
<dbReference type="Gene3D" id="1.10.1520.10">
    <property type="entry name" value="Ribonuclease III domain"/>
    <property type="match status" value="1"/>
</dbReference>
<dbReference type="HAMAP" id="MF_00104">
    <property type="entry name" value="RNase_III"/>
    <property type="match status" value="1"/>
</dbReference>
<dbReference type="InterPro" id="IPR014720">
    <property type="entry name" value="dsRBD_dom"/>
</dbReference>
<dbReference type="InterPro" id="IPR011907">
    <property type="entry name" value="RNase_III"/>
</dbReference>
<dbReference type="InterPro" id="IPR000999">
    <property type="entry name" value="RNase_III_dom"/>
</dbReference>
<dbReference type="InterPro" id="IPR036389">
    <property type="entry name" value="RNase_III_sf"/>
</dbReference>
<dbReference type="NCBIfam" id="TIGR02191">
    <property type="entry name" value="RNaseIII"/>
    <property type="match status" value="1"/>
</dbReference>
<dbReference type="PANTHER" id="PTHR11207:SF0">
    <property type="entry name" value="RIBONUCLEASE 3"/>
    <property type="match status" value="1"/>
</dbReference>
<dbReference type="PANTHER" id="PTHR11207">
    <property type="entry name" value="RIBONUCLEASE III"/>
    <property type="match status" value="1"/>
</dbReference>
<dbReference type="Pfam" id="PF00035">
    <property type="entry name" value="dsrm"/>
    <property type="match status" value="1"/>
</dbReference>
<dbReference type="Pfam" id="PF14622">
    <property type="entry name" value="Ribonucleas_3_3"/>
    <property type="match status" value="1"/>
</dbReference>
<dbReference type="SMART" id="SM00358">
    <property type="entry name" value="DSRM"/>
    <property type="match status" value="1"/>
</dbReference>
<dbReference type="SMART" id="SM00535">
    <property type="entry name" value="RIBOc"/>
    <property type="match status" value="1"/>
</dbReference>
<dbReference type="SUPFAM" id="SSF54768">
    <property type="entry name" value="dsRNA-binding domain-like"/>
    <property type="match status" value="1"/>
</dbReference>
<dbReference type="SUPFAM" id="SSF69065">
    <property type="entry name" value="RNase III domain-like"/>
    <property type="match status" value="1"/>
</dbReference>
<dbReference type="PROSITE" id="PS50137">
    <property type="entry name" value="DS_RBD"/>
    <property type="match status" value="1"/>
</dbReference>
<dbReference type="PROSITE" id="PS00517">
    <property type="entry name" value="RNASE_3_1"/>
    <property type="match status" value="1"/>
</dbReference>
<dbReference type="PROSITE" id="PS50142">
    <property type="entry name" value="RNASE_3_2"/>
    <property type="match status" value="1"/>
</dbReference>
<feature type="chain" id="PRO_1000075803" description="Ribonuclease 3">
    <location>
        <begin position="1"/>
        <end position="227"/>
    </location>
</feature>
<feature type="domain" description="RNase III" evidence="1">
    <location>
        <begin position="4"/>
        <end position="133"/>
    </location>
</feature>
<feature type="domain" description="DRBM" evidence="1">
    <location>
        <begin position="158"/>
        <end position="226"/>
    </location>
</feature>
<feature type="active site" evidence="1">
    <location>
        <position position="50"/>
    </location>
</feature>
<feature type="active site" evidence="1">
    <location>
        <position position="122"/>
    </location>
</feature>
<feature type="binding site" evidence="1">
    <location>
        <position position="46"/>
    </location>
    <ligand>
        <name>Mg(2+)</name>
        <dbReference type="ChEBI" id="CHEBI:18420"/>
    </ligand>
</feature>
<feature type="binding site" evidence="1">
    <location>
        <position position="119"/>
    </location>
    <ligand>
        <name>Mg(2+)</name>
        <dbReference type="ChEBI" id="CHEBI:18420"/>
    </ligand>
</feature>
<feature type="binding site" evidence="1">
    <location>
        <position position="122"/>
    </location>
    <ligand>
        <name>Mg(2+)</name>
        <dbReference type="ChEBI" id="CHEBI:18420"/>
    </ligand>
</feature>
<accession>A8F0M2</accession>
<comment type="function">
    <text evidence="1">Digests double-stranded RNA. Involved in the processing of primary rRNA transcript to yield the immediate precursors to the large and small rRNAs (23S and 16S). Processes some mRNAs, and tRNAs when they are encoded in the rRNA operon. Processes pre-crRNA and tracrRNA of type II CRISPR loci if present in the organism.</text>
</comment>
<comment type="catalytic activity">
    <reaction evidence="1">
        <text>Endonucleolytic cleavage to 5'-phosphomonoester.</text>
        <dbReference type="EC" id="3.1.26.3"/>
    </reaction>
</comment>
<comment type="cofactor">
    <cofactor evidence="1">
        <name>Mg(2+)</name>
        <dbReference type="ChEBI" id="CHEBI:18420"/>
    </cofactor>
</comment>
<comment type="subunit">
    <text evidence="1">Homodimer.</text>
</comment>
<comment type="subcellular location">
    <subcellularLocation>
        <location evidence="1">Cytoplasm</location>
    </subcellularLocation>
</comment>
<comment type="similarity">
    <text evidence="1">Belongs to the ribonuclease III family.</text>
</comment>
<protein>
    <recommendedName>
        <fullName evidence="1">Ribonuclease 3</fullName>
        <ecNumber evidence="1">3.1.26.3</ecNumber>
    </recommendedName>
    <alternativeName>
        <fullName evidence="1">Ribonuclease III</fullName>
        <shortName evidence="1">RNase III</shortName>
    </alternativeName>
</protein>
<gene>
    <name evidence="1" type="primary">rnc</name>
    <name type="ordered locus">RMA_0164</name>
</gene>
<evidence type="ECO:0000255" key="1">
    <source>
        <dbReference type="HAMAP-Rule" id="MF_00104"/>
    </source>
</evidence>
<proteinExistence type="inferred from homology"/>
<reference key="1">
    <citation type="journal article" date="2007" name="Genome Res.">
        <title>Lateral gene transfer between obligate intracellular bacteria: evidence from the Rickettsia massiliae genome.</title>
        <authorList>
            <person name="Blanc G."/>
            <person name="Ogata H."/>
            <person name="Robert C."/>
            <person name="Audic S."/>
            <person name="Claverie J.-M."/>
            <person name="Raoult D."/>
        </authorList>
    </citation>
    <scope>NUCLEOTIDE SEQUENCE [LARGE SCALE GENOMIC DNA]</scope>
    <source>
        <strain>Mtu5</strain>
    </source>
</reference>